<feature type="chain" id="PRO_0000079257" description="Laccase">
    <location>
        <begin position="1"/>
        <end position="513"/>
    </location>
</feature>
<feature type="domain" description="Plastocyanin-like 1" evidence="1">
    <location>
        <begin position="45"/>
        <end position="81"/>
    </location>
</feature>
<feature type="domain" description="Plastocyanin-like 2" evidence="1">
    <location>
        <begin position="101"/>
        <end position="178"/>
    </location>
</feature>
<feature type="domain" description="Plastocyanin-like 3" evidence="1">
    <location>
        <begin position="240"/>
        <end position="318"/>
    </location>
</feature>
<feature type="domain" description="Plastocyanin-like 4" evidence="1">
    <location>
        <begin position="378"/>
        <end position="509"/>
    </location>
</feature>
<feature type="binding site" description="type 2 copper site" evidence="5 6 7 11 26 27 28 29 30 31 33 34 35">
    <location>
        <position position="105"/>
    </location>
    <ligand>
        <name>Cu cation</name>
        <dbReference type="ChEBI" id="CHEBI:23378"/>
        <label>1</label>
    </ligand>
</feature>
<feature type="binding site" description="type 3 copper site" evidence="5 6 7 11 13 26 27 28 29 30 31 33 34 35 44 45">
    <location>
        <position position="107"/>
    </location>
    <ligand>
        <name>Cu cation</name>
        <dbReference type="ChEBI" id="CHEBI:23378"/>
        <label>2</label>
    </ligand>
</feature>
<feature type="binding site" description="type 3 copper site" evidence="5 6 7 11 13 26 27 28 29 30 31 33 34 35 44 45">
    <location>
        <position position="153"/>
    </location>
    <ligand>
        <name>Cu cation</name>
        <dbReference type="ChEBI" id="CHEBI:23378"/>
        <label>2</label>
    </ligand>
</feature>
<feature type="binding site" description="type 3 copper site" evidence="5 6 7 11 13 26 27 28 29 30 31 33 34 35 44 45">
    <location>
        <position position="155"/>
    </location>
    <ligand>
        <name>Cu cation</name>
        <dbReference type="ChEBI" id="CHEBI:23378"/>
        <label>3</label>
    </ligand>
</feature>
<feature type="binding site" description="type 1 copper site" evidence="5 6 7 11 13 26 27 28 29 30 31 33 34 35 44 45">
    <location>
        <position position="419"/>
    </location>
    <ligand>
        <name>Cu cation</name>
        <dbReference type="ChEBI" id="CHEBI:23378"/>
        <label>4</label>
    </ligand>
</feature>
<feature type="binding site" description="type 2 copper site" evidence="5 6 7 11 26 27 28 29 30 31 33 34 35">
    <location>
        <position position="422"/>
    </location>
    <ligand>
        <name>Cu cation</name>
        <dbReference type="ChEBI" id="CHEBI:23378"/>
        <label>1</label>
    </ligand>
</feature>
<feature type="binding site" description="type 3 copper site" evidence="5 6 7 11 13 26 27 28 29 30 31 33 34 35 44 45">
    <location>
        <position position="424"/>
    </location>
    <ligand>
        <name>Cu cation</name>
        <dbReference type="ChEBI" id="CHEBI:23378"/>
        <label>3</label>
    </ligand>
</feature>
<feature type="binding site" description="type 3 copper site" evidence="5 6 7 11 13 26 27 28 29 30 31 33 34 35 44 45">
    <location>
        <position position="491"/>
    </location>
    <ligand>
        <name>Cu cation</name>
        <dbReference type="ChEBI" id="CHEBI:23378"/>
        <label>3</label>
    </ligand>
</feature>
<feature type="binding site" description="type 1 copper site" evidence="5 6 7 11 13 26 27 28 29 30 31 33 34 35 44 45">
    <location>
        <position position="492"/>
    </location>
    <ligand>
        <name>Cu cation</name>
        <dbReference type="ChEBI" id="CHEBI:23378"/>
        <label>4</label>
    </ligand>
</feature>
<feature type="binding site" description="type 3 copper site" evidence="5 6 7 11 13 26 27 28 29 30 31 33 34 35 44 45">
    <location>
        <position position="493"/>
    </location>
    <ligand>
        <name>Cu cation</name>
        <dbReference type="ChEBI" id="CHEBI:23378"/>
        <label>2</label>
    </ligand>
</feature>
<feature type="binding site" description="type 1 copper site" evidence="5 6 7 11 13 26 27 28 29 30 31 33 34 35 44 45">
    <location>
        <position position="497"/>
    </location>
    <ligand>
        <name>Cu cation</name>
        <dbReference type="ChEBI" id="CHEBI:23378"/>
        <label>4</label>
    </ligand>
</feature>
<feature type="binding site" description="type 1 copper site" evidence="5 7 11 13 26 27 28 30 31 33 34 44 45">
    <location>
        <position position="502"/>
    </location>
    <ligand>
        <name>Cu cation</name>
        <dbReference type="ChEBI" id="CHEBI:23378"/>
        <label>4</label>
    </ligand>
</feature>
<feature type="site" description="Plays a crucial role in the protonation steps" evidence="25">
    <location>
        <position position="116"/>
    </location>
</feature>
<feature type="site" description="Plays a crucial role in the protonation steps" evidence="23 24 25">
    <location>
        <position position="498"/>
    </location>
</feature>
<feature type="mutagenesis site" description="5-fold decrease in catalytic efficiency with ABTS as substrate. 785-fold decrease in catalytic efficiency with 2,6-DMP as substrate." evidence="12">
    <original>D</original>
    <variation>A</variation>
    <location>
        <position position="116"/>
    </location>
</feature>
<feature type="mutagenesis site" description="10-fold decrease in catalytic efficiency with ABTS as substrate. 91-fold decrease in catalytic efficiency with 2,6-DMP as substrate." evidence="12">
    <original>D</original>
    <variation>E</variation>
    <location>
        <position position="116"/>
    </location>
</feature>
<feature type="mutagenesis site" description="9-fold decrease in catalytic efficiency with ABTS as substrate. Almost loss of activity with 2,6-DMP as substrate." evidence="12">
    <original>D</original>
    <variation>L</variation>
    <location>
        <position position="116"/>
    </location>
</feature>
<feature type="mutagenesis site" description="33-fold decrease in catalytic efficiency with ABTS as substrate. Almost loss of activity with 2,6-DMP as substrate." evidence="12">
    <original>D</original>
    <variation>N</variation>
    <location>
        <position position="116"/>
    </location>
</feature>
<feature type="mutagenesis site" description="6-fold decrease in catalytic efficiency with ABTS as substrate. Almost loss of activity with 2,6-DMP as substrate." evidence="12">
    <original>D</original>
    <variation>T</variation>
    <location>
        <position position="116"/>
    </location>
</feature>
<feature type="mutagenesis site" description="357-fold decrease in catalytic efficiency with ABTS as substrate. 152-fold decrease in catalytic efficiency with SGZ as substrate." evidence="13">
    <original>R</original>
    <variation>K</variation>
    <location>
        <position position="146"/>
    </location>
</feature>
<feature type="mutagenesis site" description="Slight decrease in catalytic efficiency. Shows minimal changes in the structure of the copper centers." evidence="9">
    <original>L</original>
    <variation>A</variation>
    <location>
        <position position="386"/>
    </location>
</feature>
<feature type="mutagenesis site" description="25-fold decrease in catalytic efficiency with ABTS as substrate. 30-fold decrease in catalytic efficiency with SGZ as substrate." evidence="13">
    <original>R</original>
    <variation>K</variation>
    <location>
        <position position="429"/>
    </location>
</feature>
<feature type="mutagenesis site" description="Retains approximately 50% of the wild-type activity with both ABTS and SGZ." evidence="13">
    <original>L</original>
    <variation>F</variation>
    <location>
        <position position="431"/>
    </location>
</feature>
<feature type="mutagenesis site" description="Retains approximately 20% of the wild-type activity with both ABTS and SGZ." evidence="13">
    <original>R</original>
    <variation>K</variation>
    <location>
        <position position="476"/>
    </location>
</feature>
<feature type="mutagenesis site" description="Retains approximately 70% of the wild-type activity with both ABTS and SGZ." evidence="13">
    <original>A</original>
    <variation>F</variation>
    <location>
        <position position="478"/>
    </location>
</feature>
<feature type="mutagenesis site" description="Retains approximately 60% of the wild-type activity with both ABTS and SGZ." evidence="13">
    <original>T</original>
    <variation>A</variation>
    <location>
        <position position="480"/>
    </location>
</feature>
<feature type="mutagenesis site" description="Retains approximately 30% of the wild-type activity with SGZ but does not affect activity with ABTS." evidence="13">
    <original>T</original>
    <variation>F</variation>
    <location>
        <position position="480"/>
    </location>
</feature>
<feature type="mutagenesis site" description="Decreases copper content. Strong decrease in catalytic efficiency with both ABTS and SGZ." evidence="15">
    <original>H</original>
    <variation>C</variation>
    <location>
        <position position="491"/>
    </location>
</feature>
<feature type="mutagenesis site" description="Does not affect copper content. Strong decrease in catalytic efficiency with both ABTS and SGZ." evidence="15">
    <original>H</original>
    <variation>A</variation>
    <location>
        <position position="493"/>
    </location>
</feature>
<feature type="mutagenesis site" description="Decreases copper content. Strong decrease in catalytic efficiency with both ABTS and SGZ." evidence="15">
    <original>H</original>
    <variation>C</variation>
    <location>
        <position position="493"/>
    </location>
</feature>
<feature type="mutagenesis site" description="Strong decrease in catalytic efficiency. Significant differences in both the type 1 and type 2 copper centers." evidence="9">
    <original>I</original>
    <variation>A</variation>
    <location>
        <position position="494"/>
    </location>
</feature>
<feature type="mutagenesis site" description="Loss of laccase activity. Mutant fails to develop the dark brown phenotype typical of the wild type strain. Decreases copper content." evidence="3 12">
    <original>H</original>
    <variation>A</variation>
    <location>
        <position position="497"/>
    </location>
</feature>
<feature type="mutagenesis site" description="9-fold decrease in catalytic efficiency with ABTS as substrate. 26-fold decrease in catalytic efficiency with 2,6-DMP as substrate." evidence="10">
    <original>E</original>
    <variation>D</variation>
    <location>
        <position position="498"/>
    </location>
</feature>
<feature type="mutagenesis site" description="Almost loss of laccase activity." evidence="10">
    <original>E</original>
    <variation>L</variation>
    <location>
        <position position="498"/>
    </location>
</feature>
<feature type="mutagenesis site" description="165-fold decrease in catalytic efficiency with ABTS as substrate. 400-fold decrease in catalytic efficiency with 2,6-DMP as substrate." evidence="10">
    <original>E</original>
    <variation>T</variation>
    <location>
        <position position="498"/>
    </location>
</feature>
<feature type="mutagenesis site" description="Loss of laccase activity. Mutant fails to develop the dark brown phenotype typical of the wild type strain." evidence="3">
    <original>M</original>
    <variation>L</variation>
    <location>
        <position position="502"/>
    </location>
</feature>
<feature type="sequence conflict" description="In Ref. 1; AAB62305." evidence="22" ref="1">
    <original>DESRKPKYLASYPSVQHERIQ</original>
    <variation>TKAESRSTSPHTLRYSMKDT</variation>
    <location>
        <begin position="347"/>
        <end position="367"/>
    </location>
</feature>
<feature type="sequence conflict" description="In Ref. 1; AAB62305." evidence="22" ref="1">
    <original>PTRGTHP</original>
    <variation>RHAEHIL</variation>
    <location>
        <begin position="414"/>
        <end position="420"/>
    </location>
</feature>
<feature type="sequence conflict" description="In Ref. 1; AAB62305." evidence="22" ref="1">
    <original>GPAVPPPP</original>
    <variation>VRCPAAA</variation>
    <location>
        <begin position="451"/>
        <end position="458"/>
    </location>
</feature>
<feature type="strand" evidence="50">
    <location>
        <begin position="19"/>
        <end position="21"/>
    </location>
</feature>
<feature type="strand" evidence="50">
    <location>
        <begin position="26"/>
        <end position="37"/>
    </location>
</feature>
<feature type="strand" evidence="50">
    <location>
        <begin position="46"/>
        <end position="51"/>
    </location>
</feature>
<feature type="strand" evidence="50">
    <location>
        <begin position="54"/>
        <end position="56"/>
    </location>
</feature>
<feature type="strand" evidence="50">
    <location>
        <begin position="59"/>
        <end position="63"/>
    </location>
</feature>
<feature type="strand" evidence="50">
    <location>
        <begin position="68"/>
        <end position="74"/>
    </location>
</feature>
<feature type="helix" evidence="51">
    <location>
        <begin position="86"/>
        <end position="88"/>
    </location>
</feature>
<feature type="strand" evidence="50">
    <location>
        <begin position="104"/>
        <end position="107"/>
    </location>
</feature>
<feature type="helix" evidence="50">
    <location>
        <begin position="113"/>
        <end position="115"/>
    </location>
</feature>
<feature type="helix" evidence="50">
    <location>
        <begin position="125"/>
        <end position="127"/>
    </location>
</feature>
<feature type="strand" evidence="50">
    <location>
        <begin position="128"/>
        <end position="130"/>
    </location>
</feature>
<feature type="strand" evidence="50">
    <location>
        <begin position="137"/>
        <end position="141"/>
    </location>
</feature>
<feature type="strand" evidence="50">
    <location>
        <begin position="148"/>
        <end position="154"/>
    </location>
</feature>
<feature type="turn" evidence="50">
    <location>
        <begin position="157"/>
        <end position="159"/>
    </location>
</feature>
<feature type="helix" evidence="50">
    <location>
        <begin position="160"/>
        <end position="166"/>
    </location>
</feature>
<feature type="strand" evidence="50">
    <location>
        <begin position="169"/>
        <end position="175"/>
    </location>
</feature>
<feature type="helix" evidence="50">
    <location>
        <begin position="177"/>
        <end position="182"/>
    </location>
</feature>
<feature type="helix" evidence="50">
    <location>
        <begin position="187"/>
        <end position="189"/>
    </location>
</feature>
<feature type="strand" evidence="50">
    <location>
        <begin position="190"/>
        <end position="200"/>
    </location>
</feature>
<feature type="strand" evidence="51">
    <location>
        <begin position="210"/>
        <end position="214"/>
    </location>
</feature>
<feature type="strand" evidence="52">
    <location>
        <begin position="217"/>
        <end position="219"/>
    </location>
</feature>
<feature type="strand" evidence="50">
    <location>
        <begin position="231"/>
        <end position="235"/>
    </location>
</feature>
<feature type="strand" evidence="50">
    <location>
        <begin position="238"/>
        <end position="240"/>
    </location>
</feature>
<feature type="strand" evidence="50">
    <location>
        <begin position="242"/>
        <end position="244"/>
    </location>
</feature>
<feature type="strand" evidence="50">
    <location>
        <begin position="247"/>
        <end position="256"/>
    </location>
</feature>
<feature type="strand" evidence="50">
    <location>
        <begin position="263"/>
        <end position="267"/>
    </location>
</feature>
<feature type="strand" evidence="50">
    <location>
        <begin position="273"/>
        <end position="278"/>
    </location>
</feature>
<feature type="strand" evidence="50">
    <location>
        <begin position="281"/>
        <end position="294"/>
    </location>
</feature>
<feature type="strand" evidence="50">
    <location>
        <begin position="299"/>
        <end position="305"/>
    </location>
</feature>
<feature type="helix" evidence="50">
    <location>
        <begin position="307"/>
        <end position="309"/>
    </location>
</feature>
<feature type="strand" evidence="50">
    <location>
        <begin position="313"/>
        <end position="318"/>
    </location>
</feature>
<feature type="strand" evidence="50">
    <location>
        <begin position="322"/>
        <end position="325"/>
    </location>
</feature>
<feature type="turn" evidence="50">
    <location>
        <begin position="328"/>
        <end position="332"/>
    </location>
</feature>
<feature type="strand" evidence="50">
    <location>
        <begin position="333"/>
        <end position="338"/>
    </location>
</feature>
<feature type="helix" evidence="50">
    <location>
        <begin position="359"/>
        <end position="361"/>
    </location>
</feature>
<feature type="strand" evidence="50">
    <location>
        <begin position="366"/>
        <end position="378"/>
    </location>
</feature>
<feature type="strand" evidence="50">
    <location>
        <begin position="384"/>
        <end position="388"/>
    </location>
</feature>
<feature type="strand" evidence="50">
    <location>
        <begin position="406"/>
        <end position="413"/>
    </location>
</feature>
<feature type="strand" evidence="50">
    <location>
        <begin position="415"/>
        <end position="417"/>
    </location>
</feature>
<feature type="strand" evidence="50">
    <location>
        <begin position="419"/>
        <end position="425"/>
    </location>
</feature>
<feature type="strand" evidence="50">
    <location>
        <begin position="428"/>
        <end position="436"/>
    </location>
</feature>
<feature type="helix" evidence="50">
    <location>
        <begin position="438"/>
        <end position="444"/>
    </location>
</feature>
<feature type="strand" evidence="50">
    <location>
        <begin position="449"/>
        <end position="451"/>
    </location>
</feature>
<feature type="helix" evidence="50">
    <location>
        <begin position="458"/>
        <end position="460"/>
    </location>
</feature>
<feature type="strand" evidence="50">
    <location>
        <begin position="464"/>
        <end position="469"/>
    </location>
</feature>
<feature type="strand" evidence="50">
    <location>
        <begin position="473"/>
        <end position="480"/>
    </location>
</feature>
<feature type="strand" evidence="50">
    <location>
        <begin position="486"/>
        <end position="493"/>
    </location>
</feature>
<feature type="helix" evidence="50">
    <location>
        <begin position="495"/>
        <end position="498"/>
    </location>
</feature>
<feature type="turn" evidence="50">
    <location>
        <begin position="499"/>
        <end position="501"/>
    </location>
</feature>
<feature type="strand" evidence="50">
    <location>
        <begin position="503"/>
        <end position="509"/>
    </location>
</feature>
<proteinExistence type="evidence at protein level"/>
<protein>
    <recommendedName>
        <fullName evidence="19">Laccase</fullName>
        <ecNumber evidence="2 3 9 10 12 13">1.10.3.2</ecNumber>
    </recommendedName>
    <alternativeName>
        <fullName evidence="20">Bilirubin oxidase</fullName>
        <ecNumber evidence="8 18">1.3.3.5</ecNumber>
    </alternativeName>
    <alternativeName>
        <fullName evidence="22">Spore coat protein A</fullName>
    </alternativeName>
</protein>
<evidence type="ECO:0000255" key="1"/>
<evidence type="ECO:0000269" key="2">
    <source>
    </source>
</evidence>
<evidence type="ECO:0000269" key="3">
    <source>
    </source>
</evidence>
<evidence type="ECO:0000269" key="4">
    <source>
    </source>
</evidence>
<evidence type="ECO:0000269" key="5">
    <source>
    </source>
</evidence>
<evidence type="ECO:0000269" key="6">
    <source>
    </source>
</evidence>
<evidence type="ECO:0000269" key="7">
    <source>
    </source>
</evidence>
<evidence type="ECO:0000269" key="8">
    <source>
    </source>
</evidence>
<evidence type="ECO:0000269" key="9">
    <source>
    </source>
</evidence>
<evidence type="ECO:0000269" key="10">
    <source>
    </source>
</evidence>
<evidence type="ECO:0000269" key="11">
    <source>
    </source>
</evidence>
<evidence type="ECO:0000269" key="12">
    <source>
    </source>
</evidence>
<evidence type="ECO:0000269" key="13">
    <source>
    </source>
</evidence>
<evidence type="ECO:0000269" key="14">
    <source>
    </source>
</evidence>
<evidence type="ECO:0000269" key="15">
    <source>
    </source>
</evidence>
<evidence type="ECO:0000269" key="16">
    <source>
    </source>
</evidence>
<evidence type="ECO:0000269" key="17">
    <source>
    </source>
</evidence>
<evidence type="ECO:0000269" key="18">
    <source>
    </source>
</evidence>
<evidence type="ECO:0000303" key="19">
    <source>
    </source>
</evidence>
<evidence type="ECO:0000303" key="20">
    <source>
    </source>
</evidence>
<evidence type="ECO:0000303" key="21">
    <source>
    </source>
</evidence>
<evidence type="ECO:0000305" key="22"/>
<evidence type="ECO:0000305" key="23">
    <source>
    </source>
</evidence>
<evidence type="ECO:0000305" key="24">
    <source>
    </source>
</evidence>
<evidence type="ECO:0000305" key="25">
    <source>
    </source>
</evidence>
<evidence type="ECO:0007744" key="26">
    <source>
        <dbReference type="PDB" id="1GSK"/>
    </source>
</evidence>
<evidence type="ECO:0007744" key="27">
    <source>
        <dbReference type="PDB" id="1OF0"/>
    </source>
</evidence>
<evidence type="ECO:0007744" key="28">
    <source>
        <dbReference type="PDB" id="1W6L"/>
    </source>
</evidence>
<evidence type="ECO:0007744" key="29">
    <source>
        <dbReference type="PDB" id="1W6W"/>
    </source>
</evidence>
<evidence type="ECO:0007744" key="30">
    <source>
        <dbReference type="PDB" id="1W8E"/>
    </source>
</evidence>
<evidence type="ECO:0007744" key="31">
    <source>
        <dbReference type="PDB" id="2BHF"/>
    </source>
</evidence>
<evidence type="ECO:0007744" key="32">
    <source>
        <dbReference type="PDB" id="2WSD"/>
    </source>
</evidence>
<evidence type="ECO:0007744" key="33">
    <source>
        <dbReference type="PDB" id="2X87"/>
    </source>
</evidence>
<evidence type="ECO:0007744" key="34">
    <source>
        <dbReference type="PDB" id="2X88"/>
    </source>
</evidence>
<evidence type="ECO:0007744" key="35">
    <source>
        <dbReference type="PDB" id="3ZDW"/>
    </source>
</evidence>
<evidence type="ECO:0007744" key="36">
    <source>
        <dbReference type="PDB" id="4A66"/>
    </source>
</evidence>
<evidence type="ECO:0007744" key="37">
    <source>
        <dbReference type="PDB" id="4A67"/>
    </source>
</evidence>
<evidence type="ECO:0007744" key="38">
    <source>
        <dbReference type="PDB" id="4A68"/>
    </source>
</evidence>
<evidence type="ECO:0007744" key="39">
    <source>
        <dbReference type="PDB" id="4AKO"/>
    </source>
</evidence>
<evidence type="ECO:0007744" key="40">
    <source>
        <dbReference type="PDB" id="4AKP"/>
    </source>
</evidence>
<evidence type="ECO:0007744" key="41">
    <source>
        <dbReference type="PDB" id="4AKQ"/>
    </source>
</evidence>
<evidence type="ECO:0007744" key="42">
    <source>
        <dbReference type="PDB" id="4Q89"/>
    </source>
</evidence>
<evidence type="ECO:0007744" key="43">
    <source>
        <dbReference type="PDB" id="4Q8B"/>
    </source>
</evidence>
<evidence type="ECO:0007744" key="44">
    <source>
        <dbReference type="PDB" id="4YVN"/>
    </source>
</evidence>
<evidence type="ECO:0007744" key="45">
    <source>
        <dbReference type="PDB" id="4YVU"/>
    </source>
</evidence>
<evidence type="ECO:0007744" key="46">
    <source>
        <dbReference type="PDB" id="5ZLJ"/>
    </source>
</evidence>
<evidence type="ECO:0007744" key="47">
    <source>
        <dbReference type="PDB" id="5ZLK"/>
    </source>
</evidence>
<evidence type="ECO:0007744" key="48">
    <source>
        <dbReference type="PDB" id="5ZLL"/>
    </source>
</evidence>
<evidence type="ECO:0007744" key="49">
    <source>
        <dbReference type="PDB" id="5ZLM"/>
    </source>
</evidence>
<evidence type="ECO:0007829" key="50">
    <source>
        <dbReference type="PDB" id="2WSD"/>
    </source>
</evidence>
<evidence type="ECO:0007829" key="51">
    <source>
        <dbReference type="PDB" id="2X88"/>
    </source>
</evidence>
<evidence type="ECO:0007829" key="52">
    <source>
        <dbReference type="PDB" id="5ZLM"/>
    </source>
</evidence>
<comment type="function">
    <text evidence="2 3 9 10 12 13 14">Multicopper oxidase that catalyzes the oxidation of a variety of substrates, including phenolic and non-phenolic compounds. Substrates include syringaldazine (SGZ), 2,6-dimethoxyphenol (2,6-DMP) and the non-phenolic compound 2,2'-azino-bis(3-ethylbenzothiazoline-6-sulfonic acid) (ABTS) (PubMed:11514528, PubMed:11884407, PubMed:18307408, PubMed:20200715, PubMed:22481612, PubMed:27050268). Has no tyrosinase activity (PubMed:11514528). Is implicated in the biosynthesis of a brownish pigment that characterizes sporulating colonies of B.subtilis, and which appears to be a melanin-like product and to confer protection against UV light (PubMed:11514528, PubMed:11884407, PubMed:2821284).</text>
</comment>
<comment type="function">
    <text evidence="8 18">In vitro, also shows strong bilirubin oxidase (BOD) activity, and can catalyze the oxidation of free bilirubin (UB), direct bilirubin (conjugated with glucuronic acid, DB) and ditaurobilirubin.</text>
</comment>
<comment type="catalytic activity">
    <reaction evidence="2 3 9 10 12 13">
        <text>4 hydroquinone + O2 = 4 benzosemiquinone + 2 H2O</text>
        <dbReference type="Rhea" id="RHEA:11276"/>
        <dbReference type="ChEBI" id="CHEBI:15377"/>
        <dbReference type="ChEBI" id="CHEBI:15379"/>
        <dbReference type="ChEBI" id="CHEBI:17594"/>
        <dbReference type="ChEBI" id="CHEBI:17977"/>
        <dbReference type="EC" id="1.10.3.2"/>
    </reaction>
</comment>
<comment type="catalytic activity">
    <reaction evidence="8 18">
        <text>2 (4Z,15Z)-bilirubin IXalpha + O2 = 2 biliverdin IXalpha + 2 H2O</text>
        <dbReference type="Rhea" id="RHEA:20980"/>
        <dbReference type="ChEBI" id="CHEBI:15377"/>
        <dbReference type="ChEBI" id="CHEBI:15379"/>
        <dbReference type="ChEBI" id="CHEBI:57977"/>
        <dbReference type="ChEBI" id="CHEBI:57991"/>
        <dbReference type="EC" id="1.3.3.5"/>
    </reaction>
</comment>
<comment type="cofactor">
    <cofactor evidence="2 3 4 5 10">
        <name>Cu(2+)</name>
        <dbReference type="ChEBI" id="CHEBI:29036"/>
    </cofactor>
    <text evidence="5 6 7 10 11 13">Binds 4 copper ions per subunit. The 4 copper centers adopt structures classified as type 1, type 2 and type 3.</text>
</comment>
<comment type="activity regulation">
    <text evidence="10">Inhibited by azide.</text>
</comment>
<comment type="biophysicochemical properties">
    <kinetics>
        <KM evidence="3">106 uM for ABTS</KM>
        <KM evidence="9">124 uM for ABTS</KM>
        <KM evidence="12">120 uM for ABTS</KM>
        <KM evidence="3">26 uM for SGZ</KM>
        <KM evidence="9">18 uM for SGZ</KM>
        <KM evidence="9">227 uM for 2,6-DMP</KM>
        <KM evidence="12">300 uM for 2,6-DMP</KM>
        <KM evidence="8">8 uM for bilirubin</KM>
        <KM evidence="8">15 uM for ditaurobilirubin</KM>
        <KM evidence="18">162 uM for free bilirubin (under neutral conditions)</KM>
        <KM evidence="18">45 uM for direct bilirubin (under neutral conditions)</KM>
        <KM evidence="10">25 uM for O(2)</KM>
        <KM evidence="12">20 uM for O(2)</KM>
        <Vmax evidence="3">22.0 umol/min/mg enzyme with ABTS as substrate</Vmax>
        <Vmax evidence="3">4.0 umol/min/mg enzyme with SGZ as substrate</Vmax>
        <Vmax evidence="8">28.0 umol/min/mg enzyme with bilirubin as substrate</Vmax>
        <Vmax evidence="8">10.0 umol/min/mg enzyme with ditaurobilirubin as substrate</Vmax>
        <text evidence="3 9 12 18">kcat is 16.8 sec(-1) with ABTS as substrate (PubMed:11884407). kcat is 322 sec(-1) with ABTS as substrate (PubMed:18307408). kcat is 144 sec(-1) with ABTS as substrate (PubMed:22481612). kcat is 3.7 sec(-1) with SGZ as substrate (PubMed:11884407). kcat is 80 sec(-1) with SGZ as substrate (PubMed:18307408). kcat is 36 sec(-1) with 2,6-DMP as substrate (PubMed:18307408). kcat is 33 sec(-1) with 2,6-DMP as substrate (PubMed:22481612). kcat is 1.59 sec(-1) with free bilirubin as substrate (PubMed:33618226). kcat is 4.77 sec(-1) with direct bilirubin as substrate (PubMed:33618226). kcat is 140 sec(-1) for O(2) consumption (PubMed:22481612).</text>
    </kinetics>
    <phDependence>
        <text evidence="2 3 8 18">Optimum pH is 7 for SGZ and bilirubin oxidation (PubMed:11514528, PubMed:11884407, PubMed:16391148). Optimum pH is about 4 for ditaurobilirubin oxidation (PubMed:16391148). Optimum pH is below 3.0 for ABTS oxidation (PubMed:11884407). Optimum pH is 8.0 for UB oxidation, whereas optimum pH for DB oxidation is 5.5 (PubMed:33618226).</text>
    </phDependence>
    <temperatureDependence>
        <text evidence="2 3 8">Highly thermostable (PubMed:11884407, PubMed:16391148). Optimum temperature is 45 degrees Celsius for SGZ oxidation (PubMed:11514528). Optimum temperature is 75 degrees Celsius with ABTS as substrate (PubMed:11884407).</text>
    </temperatureDependence>
</comment>
<comment type="subunit">
    <text evidence="3 5">Monomer.</text>
</comment>
<comment type="subcellular location">
    <subcellularLocation>
        <location evidence="3 14">Spore coat</location>
    </subcellularLocation>
    <text evidence="3">Localized to the surface layers of the endospore.</text>
</comment>
<comment type="induction">
    <text evidence="17">Expression is switched on about four to five hours after the onset of sporulation, a time that corresponds approximately to the stage of spore coat synthesis and deposition.</text>
</comment>
<comment type="domain">
    <text evidence="10 11 12">Glu-498, located within the entrance channel of the trinuclear center, plays a key role in the protonation events that occur at the trinuclear center and in its stabilization, controlling therefore the binding of dioxygen and its further reduction (PubMed:20200715, PubMed:20822511). Asp-116, situated in the exit channel of the trinuclear center, and its hydrogen bond connectivity are highly relevant for the overall reactivity of the laccase but do not appear to play a critical structural role (PubMed:22481612).</text>
</comment>
<comment type="disruption phenotype">
    <text evidence="14">Disruption of the gene does not prevent spore formation, but mutant is blocked in the appearance of the brown pigment characteristic of colonies of wild-type sporulating cells.</text>
</comment>
<comment type="biotechnology">
    <text evidence="16">When expressed on the surface of E.coli cells, CotA was shown to possess improved enzymatic properties, including higher thermal stability and stronger inhibitor tolerance. It has high enzymatic activity against three industrial dye types: an anthraquinone dye, Acid Blue 62, a triphenylmethane dye, Malachite Green, and an azo dye, Methyl Orange. It may help decrease the costs and simplify wastewater treatment, and therefore, surface-displayed CotA shows a great potential for industrial-scale dye decolorization.</text>
</comment>
<comment type="biotechnology">
    <text evidence="18">CotA is also a promising candidate for the clinical determination of direct bilirubin and total bilirubin, which are significant diagnostic marker of liver function and cancer.</text>
</comment>
<comment type="similarity">
    <text evidence="22">Belongs to the multicopper oxidase family.</text>
</comment>
<comment type="sequence caution" evidence="22">
    <conflict type="erroneous initiation">
        <sequence resource="EMBL-CDS" id="BAA22774"/>
    </conflict>
</comment>
<comment type="sequence caution" evidence="22">
    <conflict type="erroneous initiation">
        <sequence resource="EMBL-CDS" id="CAA29165"/>
    </conflict>
</comment>
<name>COTA_BACSU</name>
<organism>
    <name type="scientific">Bacillus subtilis (strain 168)</name>
    <dbReference type="NCBI Taxonomy" id="224308"/>
    <lineage>
        <taxon>Bacteria</taxon>
        <taxon>Bacillati</taxon>
        <taxon>Bacillota</taxon>
        <taxon>Bacilli</taxon>
        <taxon>Bacillales</taxon>
        <taxon>Bacillaceae</taxon>
        <taxon>Bacillus</taxon>
    </lineage>
</organism>
<dbReference type="EC" id="1.10.3.2" evidence="2 3 9 10 12 13"/>
<dbReference type="EC" id="1.3.3.5" evidence="8 18"/>
<dbReference type="EMBL" id="U51115">
    <property type="protein sequence ID" value="AAB62305.1"/>
    <property type="molecule type" value="Genomic_DNA"/>
</dbReference>
<dbReference type="EMBL" id="AB007638">
    <property type="protein sequence ID" value="BAA22774.1"/>
    <property type="status" value="ALT_INIT"/>
    <property type="molecule type" value="Genomic_DNA"/>
</dbReference>
<dbReference type="EMBL" id="AL009126">
    <property type="protein sequence ID" value="CAB12449.1"/>
    <property type="molecule type" value="Genomic_DNA"/>
</dbReference>
<dbReference type="EMBL" id="X05678">
    <property type="protein sequence ID" value="CAA29165.1"/>
    <property type="status" value="ALT_INIT"/>
    <property type="molecule type" value="Genomic_DNA"/>
</dbReference>
<dbReference type="EMBL" id="X07512">
    <property type="protein sequence ID" value="CAA30392.1"/>
    <property type="molecule type" value="Genomic_DNA"/>
</dbReference>
<dbReference type="EMBL" id="U31756">
    <property type="protein sequence ID" value="AAC44642.1"/>
    <property type="molecule type" value="Genomic_DNA"/>
</dbReference>
<dbReference type="PIR" id="F69604">
    <property type="entry name" value="F69604"/>
</dbReference>
<dbReference type="RefSeq" id="NP_388511.1">
    <property type="nucleotide sequence ID" value="NC_000964.3"/>
</dbReference>
<dbReference type="RefSeq" id="WP_003243170.1">
    <property type="nucleotide sequence ID" value="NZ_OZ025638.1"/>
</dbReference>
<dbReference type="PDB" id="1GSK">
    <property type="method" value="X-ray"/>
    <property type="resolution" value="1.70 A"/>
    <property type="chains" value="A=1-513"/>
</dbReference>
<dbReference type="PDB" id="1OF0">
    <property type="method" value="X-ray"/>
    <property type="resolution" value="2.45 A"/>
    <property type="chains" value="A=1-513"/>
</dbReference>
<dbReference type="PDB" id="1W6L">
    <property type="method" value="X-ray"/>
    <property type="resolution" value="2.00 A"/>
    <property type="chains" value="A=1-513"/>
</dbReference>
<dbReference type="PDB" id="1W6W">
    <property type="method" value="X-ray"/>
    <property type="resolution" value="2.20 A"/>
    <property type="chains" value="A=1-513"/>
</dbReference>
<dbReference type="PDB" id="1W8E">
    <property type="method" value="X-ray"/>
    <property type="resolution" value="2.20 A"/>
    <property type="chains" value="A=1-513"/>
</dbReference>
<dbReference type="PDB" id="2BHF">
    <property type="method" value="X-ray"/>
    <property type="resolution" value="2.50 A"/>
    <property type="chains" value="A=1-513"/>
</dbReference>
<dbReference type="PDB" id="2WSD">
    <property type="method" value="X-ray"/>
    <property type="resolution" value="1.60 A"/>
    <property type="chains" value="A=1-513"/>
</dbReference>
<dbReference type="PDB" id="2X87">
    <property type="method" value="X-ray"/>
    <property type="resolution" value="2.00 A"/>
    <property type="chains" value="A=1-513"/>
</dbReference>
<dbReference type="PDB" id="2X88">
    <property type="method" value="X-ray"/>
    <property type="resolution" value="1.80 A"/>
    <property type="chains" value="A=1-513"/>
</dbReference>
<dbReference type="PDB" id="3ZDW">
    <property type="method" value="X-ray"/>
    <property type="resolution" value="2.45 A"/>
    <property type="chains" value="A=1-513"/>
</dbReference>
<dbReference type="PDB" id="4A66">
    <property type="method" value="X-ray"/>
    <property type="resolution" value="1.95 A"/>
    <property type="chains" value="A=1-513"/>
</dbReference>
<dbReference type="PDB" id="4A67">
    <property type="method" value="X-ray"/>
    <property type="resolution" value="2.10 A"/>
    <property type="chains" value="A=1-513"/>
</dbReference>
<dbReference type="PDB" id="4A68">
    <property type="method" value="X-ray"/>
    <property type="resolution" value="2.00 A"/>
    <property type="chains" value="A=1-513"/>
</dbReference>
<dbReference type="PDB" id="4AKO">
    <property type="method" value="X-ray"/>
    <property type="resolution" value="1.70 A"/>
    <property type="chains" value="A=1-513"/>
</dbReference>
<dbReference type="PDB" id="4AKP">
    <property type="method" value="X-ray"/>
    <property type="resolution" value="2.00 A"/>
    <property type="chains" value="A=1-513"/>
</dbReference>
<dbReference type="PDB" id="4AKQ">
    <property type="method" value="X-ray"/>
    <property type="resolution" value="2.10 A"/>
    <property type="chains" value="A=1-513"/>
</dbReference>
<dbReference type="PDB" id="4Q89">
    <property type="method" value="X-ray"/>
    <property type="resolution" value="2.31 A"/>
    <property type="chains" value="A/B=1-513"/>
</dbReference>
<dbReference type="PDB" id="4Q8B">
    <property type="method" value="X-ray"/>
    <property type="resolution" value="1.91 A"/>
    <property type="chains" value="A/B=1-513"/>
</dbReference>
<dbReference type="PDB" id="4YVN">
    <property type="method" value="X-ray"/>
    <property type="resolution" value="2.30 A"/>
    <property type="chains" value="A=1-513"/>
</dbReference>
<dbReference type="PDB" id="4YVU">
    <property type="method" value="X-ray"/>
    <property type="resolution" value="2.30 A"/>
    <property type="chains" value="A=1-513"/>
</dbReference>
<dbReference type="PDB" id="5ZLJ">
    <property type="method" value="X-ray"/>
    <property type="resolution" value="1.96 A"/>
    <property type="chains" value="A=1-513"/>
</dbReference>
<dbReference type="PDB" id="5ZLK">
    <property type="method" value="X-ray"/>
    <property type="resolution" value="2.60 A"/>
    <property type="chains" value="A=1-513"/>
</dbReference>
<dbReference type="PDB" id="5ZLL">
    <property type="method" value="X-ray"/>
    <property type="resolution" value="2.60 A"/>
    <property type="chains" value="A=1-513"/>
</dbReference>
<dbReference type="PDB" id="5ZLM">
    <property type="method" value="X-ray"/>
    <property type="resolution" value="1.70 A"/>
    <property type="chains" value="A=1-513"/>
</dbReference>
<dbReference type="PDB" id="7Y8B">
    <property type="method" value="X-ray"/>
    <property type="resolution" value="2.00 A"/>
    <property type="chains" value="A/B=1-513"/>
</dbReference>
<dbReference type="PDB" id="7Y8C">
    <property type="method" value="X-ray"/>
    <property type="resolution" value="2.00 A"/>
    <property type="chains" value="A/B=1-513"/>
</dbReference>
<dbReference type="PDBsum" id="1GSK"/>
<dbReference type="PDBsum" id="1OF0"/>
<dbReference type="PDBsum" id="1W6L"/>
<dbReference type="PDBsum" id="1W6W"/>
<dbReference type="PDBsum" id="1W8E"/>
<dbReference type="PDBsum" id="2BHF"/>
<dbReference type="PDBsum" id="2WSD"/>
<dbReference type="PDBsum" id="2X87"/>
<dbReference type="PDBsum" id="2X88"/>
<dbReference type="PDBsum" id="3ZDW"/>
<dbReference type="PDBsum" id="4A66"/>
<dbReference type="PDBsum" id="4A67"/>
<dbReference type="PDBsum" id="4A68"/>
<dbReference type="PDBsum" id="4AKO"/>
<dbReference type="PDBsum" id="4AKP"/>
<dbReference type="PDBsum" id="4AKQ"/>
<dbReference type="PDBsum" id="4Q89"/>
<dbReference type="PDBsum" id="4Q8B"/>
<dbReference type="PDBsum" id="4YVN"/>
<dbReference type="PDBsum" id="4YVU"/>
<dbReference type="PDBsum" id="5ZLJ"/>
<dbReference type="PDBsum" id="5ZLK"/>
<dbReference type="PDBsum" id="5ZLL"/>
<dbReference type="PDBsum" id="5ZLM"/>
<dbReference type="PDBsum" id="7Y8B"/>
<dbReference type="PDBsum" id="7Y8C"/>
<dbReference type="SMR" id="P07788"/>
<dbReference type="FunCoup" id="P07788">
    <property type="interactions" value="74"/>
</dbReference>
<dbReference type="STRING" id="224308.BSU06300"/>
<dbReference type="PaxDb" id="224308-BSU06300"/>
<dbReference type="EnsemblBacteria" id="CAB12449">
    <property type="protein sequence ID" value="CAB12449"/>
    <property type="gene ID" value="BSU_06300"/>
</dbReference>
<dbReference type="GeneID" id="936023"/>
<dbReference type="KEGG" id="bsu:BSU06300"/>
<dbReference type="PATRIC" id="fig|224308.179.peg.683"/>
<dbReference type="eggNOG" id="COG2132">
    <property type="taxonomic scope" value="Bacteria"/>
</dbReference>
<dbReference type="InParanoid" id="P07788"/>
<dbReference type="OrthoDB" id="9757546at2"/>
<dbReference type="PhylomeDB" id="P07788"/>
<dbReference type="BioCyc" id="BSUB:BSU06300-MONOMER"/>
<dbReference type="BRENDA" id="1.3.3.5">
    <property type="organism ID" value="658"/>
</dbReference>
<dbReference type="SABIO-RK" id="P07788"/>
<dbReference type="EvolutionaryTrace" id="P07788"/>
<dbReference type="Proteomes" id="UP000001570">
    <property type="component" value="Chromosome"/>
</dbReference>
<dbReference type="GO" id="GO:0030288">
    <property type="term" value="C:outer membrane-bounded periplasmic space"/>
    <property type="evidence" value="ECO:0000318"/>
    <property type="project" value="GO_Central"/>
</dbReference>
<dbReference type="GO" id="GO:0005507">
    <property type="term" value="F:copper ion binding"/>
    <property type="evidence" value="ECO:0007669"/>
    <property type="project" value="InterPro"/>
</dbReference>
<dbReference type="GO" id="GO:0016491">
    <property type="term" value="F:oxidoreductase activity"/>
    <property type="evidence" value="ECO:0000318"/>
    <property type="project" value="GO_Central"/>
</dbReference>
<dbReference type="GO" id="GO:0030435">
    <property type="term" value="P:sporulation resulting in formation of a cellular spore"/>
    <property type="evidence" value="ECO:0007669"/>
    <property type="project" value="UniProtKB-KW"/>
</dbReference>
<dbReference type="CDD" id="cd13844">
    <property type="entry name" value="CuRO_1_BOD_CotA_like"/>
    <property type="match status" value="1"/>
</dbReference>
<dbReference type="CDD" id="cd13868">
    <property type="entry name" value="CuRO_2_CotA_like"/>
    <property type="match status" value="1"/>
</dbReference>
<dbReference type="CDD" id="cd13891">
    <property type="entry name" value="CuRO_3_CotA_like"/>
    <property type="match status" value="1"/>
</dbReference>
<dbReference type="FunFam" id="2.60.40.420:FF:000081">
    <property type="entry name" value="Spore coat protein A"/>
    <property type="match status" value="1"/>
</dbReference>
<dbReference type="FunFam" id="2.60.40.420:FF:000087">
    <property type="entry name" value="Spore coat protein A"/>
    <property type="match status" value="1"/>
</dbReference>
<dbReference type="Gene3D" id="2.60.40.420">
    <property type="entry name" value="Cupredoxins - blue copper proteins"/>
    <property type="match status" value="3"/>
</dbReference>
<dbReference type="InterPro" id="IPR011707">
    <property type="entry name" value="Cu-oxidase-like_N"/>
</dbReference>
<dbReference type="InterPro" id="IPR001117">
    <property type="entry name" value="Cu-oxidase_2nd"/>
</dbReference>
<dbReference type="InterPro" id="IPR011706">
    <property type="entry name" value="Cu-oxidase_C"/>
</dbReference>
<dbReference type="InterPro" id="IPR045087">
    <property type="entry name" value="Cu-oxidase_fam"/>
</dbReference>
<dbReference type="InterPro" id="IPR008972">
    <property type="entry name" value="Cupredoxin"/>
</dbReference>
<dbReference type="PANTHER" id="PTHR48267:SF1">
    <property type="entry name" value="BILIRUBIN OXIDASE"/>
    <property type="match status" value="1"/>
</dbReference>
<dbReference type="PANTHER" id="PTHR48267">
    <property type="entry name" value="CUPREDOXIN SUPERFAMILY PROTEIN"/>
    <property type="match status" value="1"/>
</dbReference>
<dbReference type="Pfam" id="PF00394">
    <property type="entry name" value="Cu-oxidase"/>
    <property type="match status" value="1"/>
</dbReference>
<dbReference type="Pfam" id="PF07731">
    <property type="entry name" value="Cu-oxidase_2"/>
    <property type="match status" value="1"/>
</dbReference>
<dbReference type="Pfam" id="PF07732">
    <property type="entry name" value="Cu-oxidase_3"/>
    <property type="match status" value="2"/>
</dbReference>
<dbReference type="SUPFAM" id="SSF49503">
    <property type="entry name" value="Cupredoxins"/>
    <property type="match status" value="3"/>
</dbReference>
<reference key="1">
    <citation type="journal article" date="1996" name="Microbiology">
        <title>The 52 degrees-55 degrees segment of the Bacillus subtilis chromosome: a region devoted to purine uptake and metabolism, and containing the genes cotA, gabP and guaA and the pur gene cluster within a 34960 bp nucleotide sequence.</title>
        <authorList>
            <person name="Borriss R."/>
            <person name="Porwollik S."/>
            <person name="Schroeter R."/>
        </authorList>
    </citation>
    <scope>NUCLEOTIDE SEQUENCE [GENOMIC DNA]</scope>
    <source>
        <strain>168</strain>
    </source>
</reference>
<reference key="2">
    <citation type="journal article" date="1997" name="DNA Res.">
        <title>Sequence analysis of the groESL-cotA region of the Bacillus subtilis genome, containing the restriction/modification system genes.</title>
        <authorList>
            <person name="Kasahara Y."/>
            <person name="Nakai S."/>
            <person name="Ogasawara N."/>
            <person name="Yata K."/>
            <person name="Sadaie Y."/>
        </authorList>
    </citation>
    <scope>NUCLEOTIDE SEQUENCE [GENOMIC DNA]</scope>
    <source>
        <strain>168 / Marburg / ATCC 6051 / DSM 10 / JCM 1465 / NBRC 13719 / NCIMB 3610 / NRRL NRS-744 / VKM B-501</strain>
    </source>
</reference>
<reference key="3">
    <citation type="journal article" date="1997" name="Nature">
        <title>The complete genome sequence of the Gram-positive bacterium Bacillus subtilis.</title>
        <authorList>
            <person name="Kunst F."/>
            <person name="Ogasawara N."/>
            <person name="Moszer I."/>
            <person name="Albertini A.M."/>
            <person name="Alloni G."/>
            <person name="Azevedo V."/>
            <person name="Bertero M.G."/>
            <person name="Bessieres P."/>
            <person name="Bolotin A."/>
            <person name="Borchert S."/>
            <person name="Borriss R."/>
            <person name="Boursier L."/>
            <person name="Brans A."/>
            <person name="Braun M."/>
            <person name="Brignell S.C."/>
            <person name="Bron S."/>
            <person name="Brouillet S."/>
            <person name="Bruschi C.V."/>
            <person name="Caldwell B."/>
            <person name="Capuano V."/>
            <person name="Carter N.M."/>
            <person name="Choi S.-K."/>
            <person name="Codani J.-J."/>
            <person name="Connerton I.F."/>
            <person name="Cummings N.J."/>
            <person name="Daniel R.A."/>
            <person name="Denizot F."/>
            <person name="Devine K.M."/>
            <person name="Duesterhoeft A."/>
            <person name="Ehrlich S.D."/>
            <person name="Emmerson P.T."/>
            <person name="Entian K.-D."/>
            <person name="Errington J."/>
            <person name="Fabret C."/>
            <person name="Ferrari E."/>
            <person name="Foulger D."/>
            <person name="Fritz C."/>
            <person name="Fujita M."/>
            <person name="Fujita Y."/>
            <person name="Fuma S."/>
            <person name="Galizzi A."/>
            <person name="Galleron N."/>
            <person name="Ghim S.-Y."/>
            <person name="Glaser P."/>
            <person name="Goffeau A."/>
            <person name="Golightly E.J."/>
            <person name="Grandi G."/>
            <person name="Guiseppi G."/>
            <person name="Guy B.J."/>
            <person name="Haga K."/>
            <person name="Haiech J."/>
            <person name="Harwood C.R."/>
            <person name="Henaut A."/>
            <person name="Hilbert H."/>
            <person name="Holsappel S."/>
            <person name="Hosono S."/>
            <person name="Hullo M.-F."/>
            <person name="Itaya M."/>
            <person name="Jones L.-M."/>
            <person name="Joris B."/>
            <person name="Karamata D."/>
            <person name="Kasahara Y."/>
            <person name="Klaerr-Blanchard M."/>
            <person name="Klein C."/>
            <person name="Kobayashi Y."/>
            <person name="Koetter P."/>
            <person name="Koningstein G."/>
            <person name="Krogh S."/>
            <person name="Kumano M."/>
            <person name="Kurita K."/>
            <person name="Lapidus A."/>
            <person name="Lardinois S."/>
            <person name="Lauber J."/>
            <person name="Lazarevic V."/>
            <person name="Lee S.-M."/>
            <person name="Levine A."/>
            <person name="Liu H."/>
            <person name="Masuda S."/>
            <person name="Mauel C."/>
            <person name="Medigue C."/>
            <person name="Medina N."/>
            <person name="Mellado R.P."/>
            <person name="Mizuno M."/>
            <person name="Moestl D."/>
            <person name="Nakai S."/>
            <person name="Noback M."/>
            <person name="Noone D."/>
            <person name="O'Reilly M."/>
            <person name="Ogawa K."/>
            <person name="Ogiwara A."/>
            <person name="Oudega B."/>
            <person name="Park S.-H."/>
            <person name="Parro V."/>
            <person name="Pohl T.M."/>
            <person name="Portetelle D."/>
            <person name="Porwollik S."/>
            <person name="Prescott A.M."/>
            <person name="Presecan E."/>
            <person name="Pujic P."/>
            <person name="Purnelle B."/>
            <person name="Rapoport G."/>
            <person name="Rey M."/>
            <person name="Reynolds S."/>
            <person name="Rieger M."/>
            <person name="Rivolta C."/>
            <person name="Rocha E."/>
            <person name="Roche B."/>
            <person name="Rose M."/>
            <person name="Sadaie Y."/>
            <person name="Sato T."/>
            <person name="Scanlan E."/>
            <person name="Schleich S."/>
            <person name="Schroeter R."/>
            <person name="Scoffone F."/>
            <person name="Sekiguchi J."/>
            <person name="Sekowska A."/>
            <person name="Seror S.J."/>
            <person name="Serror P."/>
            <person name="Shin B.-S."/>
            <person name="Soldo B."/>
            <person name="Sorokin A."/>
            <person name="Tacconi E."/>
            <person name="Takagi T."/>
            <person name="Takahashi H."/>
            <person name="Takemaru K."/>
            <person name="Takeuchi M."/>
            <person name="Tamakoshi A."/>
            <person name="Tanaka T."/>
            <person name="Terpstra P."/>
            <person name="Tognoni A."/>
            <person name="Tosato V."/>
            <person name="Uchiyama S."/>
            <person name="Vandenbol M."/>
            <person name="Vannier F."/>
            <person name="Vassarotti A."/>
            <person name="Viari A."/>
            <person name="Wambutt R."/>
            <person name="Wedler E."/>
            <person name="Wedler H."/>
            <person name="Weitzenegger T."/>
            <person name="Winters P."/>
            <person name="Wipat A."/>
            <person name="Yamamoto H."/>
            <person name="Yamane K."/>
            <person name="Yasumoto K."/>
            <person name="Yata K."/>
            <person name="Yoshida K."/>
            <person name="Yoshikawa H.-F."/>
            <person name="Zumstein E."/>
            <person name="Yoshikawa H."/>
            <person name="Danchin A."/>
        </authorList>
    </citation>
    <scope>NUCLEOTIDE SEQUENCE [LARGE SCALE GENOMIC DNA]</scope>
    <source>
        <strain>168</strain>
    </source>
</reference>
<reference key="4">
    <citation type="journal article" date="1987" name="J. Mol. Biol.">
        <title>Genes encoding spore coat polypeptides from Bacillus subtilis.</title>
        <authorList>
            <person name="Donovan W."/>
            <person name="Zheng L."/>
            <person name="Sandman K."/>
            <person name="Losick R."/>
        </authorList>
    </citation>
    <scope>NUCLEOTIDE SEQUENCE [GENOMIC DNA] OF 1-37</scope>
    <scope>FUNCTION</scope>
    <scope>SUBCELLULAR LOCATION</scope>
    <scope>DISRUPTION PHENOTYPE</scope>
</reference>
<reference key="5">
    <citation type="journal article" date="1988" name="J. Mol. Biol.">
        <title>Identification of the promoter for a spore coat protein gene in Bacillus subtilis and studies on the regulation of its induction at a late stage of sporulation.</title>
        <authorList>
            <person name="Sandman K."/>
            <person name="Kroos L."/>
            <person name="Cutting S.M."/>
            <person name="Youngman P."/>
            <person name="Losick R."/>
        </authorList>
    </citation>
    <scope>NUCLEOTIDE SEQUENCE [GENOMIC DNA] OF 1-34</scope>
    <scope>INDUCTION</scope>
</reference>
<reference key="6">
    <citation type="submission" date="1995-07" db="EMBL/GenBank/DDBJ databases">
        <authorList>
            <person name="Wray L.V. Jr."/>
            <person name="Ferson A.E."/>
            <person name="Fisher S.H."/>
        </authorList>
    </citation>
    <scope>NUCLEOTIDE SEQUENCE [GENOMIC DNA] OF 1-10</scope>
    <source>
        <strain>168</strain>
    </source>
</reference>
<reference key="7">
    <citation type="journal article" date="2001" name="J. Bacteriol.">
        <title>CotA of Bacillus subtilis is a copper-dependent laccase.</title>
        <authorList>
            <person name="Hullo M.F."/>
            <person name="Moszer I."/>
            <person name="Danchin A."/>
            <person name="Martin-Verstraete I."/>
        </authorList>
    </citation>
    <scope>FUNCTION</scope>
    <scope>CATALYTIC ACTIVITY</scope>
    <scope>BIOPHYSICOCHEMICAL PROPERTIES</scope>
    <scope>COFACTOR</scope>
</reference>
<reference key="8">
    <citation type="journal article" date="2002" name="J. Biol. Chem.">
        <title>Molecular and biochemical characterization of a highly stable bacterial laccase that occurs as a structural component of the Bacillus subtilis endospore coat.</title>
        <authorList>
            <person name="Martins L.O."/>
            <person name="Soares C.M."/>
            <person name="Pereira M.M."/>
            <person name="Teixeira M."/>
            <person name="Costa T."/>
            <person name="Jones G.H."/>
            <person name="Henriques A.O."/>
        </authorList>
    </citation>
    <scope>FUNCTION</scope>
    <scope>CATALYTIC ACTIVITY</scope>
    <scope>COFACTOR</scope>
    <scope>BIOPHYSICOCHEMICAL PROPERTIES</scope>
    <scope>SUBUNIT</scope>
    <scope>SUBCELLULAR LOCATION</scope>
    <scope>MUTAGENESIS OF HIS-497 AND MET-502</scope>
    <source>
        <strain>168 / MB24</strain>
    </source>
</reference>
<reference key="9">
    <citation type="journal article" date="2002" name="Acta Crystallogr. D">
        <title>Spore-coat laccase CotA from Bacillus subtilis: crystallization and preliminary X-ray characterization by the MAD method.</title>
        <authorList>
            <person name="Enguita F.J."/>
            <person name="Matias P.M."/>
            <person name="Martins L.O."/>
            <person name="Placido D."/>
            <person name="Henriques A.O."/>
            <person name="Carrondo M.A."/>
        </authorList>
    </citation>
    <scope>COFACTOR</scope>
    <scope>CRYSTALLIZATION</scope>
</reference>
<reference key="10">
    <citation type="journal article" date="2006" name="Appl. Environ. Microbiol.">
        <title>Bilirubin oxidase activity of Bacillus subtilis CotA.</title>
        <authorList>
            <person name="Sakasegawa S."/>
            <person name="Ishikawa H."/>
            <person name="Imamura S."/>
            <person name="Sakuraba H."/>
            <person name="Goda S."/>
            <person name="Ohshima T."/>
        </authorList>
    </citation>
    <scope>FUNCTION AS A BILIRUBIN OXIDASE</scope>
    <scope>CATALYTIC ACTIVITY</scope>
    <scope>BIOPHYSICOCHEMICAL PROPERTIES</scope>
</reference>
<reference key="11">
    <citation type="journal article" date="2012" name="Dalton Trans.">
        <title>The kinetic role of carboxylate residues in the proximity of the trinuclear centre in the O2 reactivity of CotA-laccase.</title>
        <authorList>
            <person name="Brissos V."/>
            <person name="Chen Z."/>
            <person name="Martins L.O."/>
        </authorList>
    </citation>
    <scope>FUNCTION</scope>
    <scope>CATALYTIC ACTIVITY</scope>
    <scope>BIOPHYSICOCHEMICAL PROPERTIES</scope>
    <scope>DOMAIN</scope>
    <scope>MUTAGENESIS OF ASP-116 AND HIS-497</scope>
</reference>
<reference key="12">
    <citation type="journal article" date="2018" name="Mol. Biotechnol.">
        <title>Surface display of bacterial laccase CotA on Escherichia coli cells and its application in industrial dye decolorization.</title>
        <authorList>
            <person name="Zhang Y."/>
            <person name="Dong W."/>
            <person name="Lv Z."/>
            <person name="Liu J."/>
            <person name="Zhang W."/>
            <person name="Zhou J."/>
            <person name="Xin F."/>
            <person name="Ma J."/>
            <person name="Jiang M."/>
        </authorList>
    </citation>
    <scope>BIOTECHNOLOGY</scope>
</reference>
<reference key="13">
    <citation type="journal article" date="2021" name="Biochem. Biophys. Res. Commun.">
        <title>An effective enzymatic assay for pH selectively measuring direct and total bilirubin concentration by using of CotA.</title>
        <authorList>
            <person name="Zhang C."/>
            <person name="Zhu L."/>
            <person name="Zhang J."/>
            <person name="Wang W."/>
            <person name="Zeng Y."/>
            <person name="You S."/>
            <person name="Qi W."/>
            <person name="Su R."/>
            <person name="He Z."/>
        </authorList>
    </citation>
    <scope>FUNCTION AS A BILIRUBIN OXIDASE</scope>
    <scope>CATALYTIC ACTIVITY</scope>
    <scope>BIOPHYSICOCHEMICAL PROPERTIES</scope>
    <scope>BIOTECHNOLOGY</scope>
</reference>
<reference evidence="26" key="14">
    <citation type="journal article" date="2003" name="J. Biol. Chem.">
        <title>Crystal structure of a bacterial endospore coat component. A laccase with enhanced thermostability properties.</title>
        <authorList>
            <person name="Enguita F.J."/>
            <person name="Martins L.O."/>
            <person name="Henriques A.O."/>
            <person name="Carrondo M.A."/>
        </authorList>
    </citation>
    <scope>X-RAY CRYSTALLOGRAPHY (1.70 ANGSTROMS) IN COMPLEX WITH COPPER</scope>
    <scope>COFACTOR</scope>
    <scope>SUBUNIT</scope>
</reference>
<reference evidence="27" key="15">
    <citation type="submission" date="2003-04" db="PDB data bank">
        <title>Structural characterization of a bacterial laccase reaction cycle.</title>
        <authorList>
            <person name="Enguita F.J."/>
            <person name="Marcal D."/>
            <person name="Grenha R."/>
            <person name="Martins L.O."/>
            <person name="Henriques A.O."/>
            <person name="Carrondo M.A."/>
        </authorList>
    </citation>
    <scope>X-RAY CRYSTALLOGRAPHY (2.45 ANGSTROMS) IN COMPLEX WITH COPPER</scope>
</reference>
<reference evidence="35" key="16">
    <citation type="journal article" date="2004" name="J. Biol. Chem.">
        <title>Substrate and dioxygen binding to the endospore coat laccase from Bacillus subtilis.</title>
        <authorList>
            <person name="Enguita F.J."/>
            <person name="Marcal D."/>
            <person name="Martins L.O."/>
            <person name="Grenha R."/>
            <person name="Henriques A.O."/>
            <person name="Lindley P.F."/>
            <person name="Carrondo M.A."/>
        </authorList>
    </citation>
    <scope>X-RAY CRYSTALLOGRAPHY (2.40 ANGSTROMS) IN COMPLEX WITH COPPER AND ABTS</scope>
    <scope>COFACTOR</scope>
</reference>
<reference evidence="28 29 30 31" key="17">
    <citation type="journal article" date="2005" name="Dalton Trans.">
        <title>Dioxygen reduction by multi-copper oxidases; a structural perspective.</title>
        <authorList>
            <person name="Bento I."/>
            <person name="Martins L.O."/>
            <person name="Gato Lopes G."/>
            <person name="Armenia Carrondo M."/>
            <person name="Lindley P.F."/>
        </authorList>
    </citation>
    <scope>X-RAY CRYSTALLOGRAPHY (2.00 ANGSTROMS) IN COMPLEXES WITH COPPER; PEROXIDE AND AZIDE</scope>
    <scope>COFACTOR</scope>
</reference>
<reference evidence="32" key="18">
    <citation type="journal article" date="2008" name="Biochem. J.">
        <title>Proximal mutations at the type 1 copper site of CotA laccase: spectroscopic, redox, kinetic and structural characterization of I494A and L386A mutants.</title>
        <authorList>
            <person name="Durao P."/>
            <person name="Chen Z."/>
            <person name="Silva C.S."/>
            <person name="Soares C.M."/>
            <person name="Pereira M.M."/>
            <person name="Todorovic S."/>
            <person name="Hildebrandt P."/>
            <person name="Bento I."/>
            <person name="Lindley P.F."/>
            <person name="Martins L.O."/>
        </authorList>
    </citation>
    <scope>X-RAY CRYSTALLOGRAPHY (1.60 ANGSTROMS) OF MUTANT ALA-494 IN COMPLEX WITH COPPER</scope>
    <scope>FUNCTION</scope>
    <scope>CATALYTIC ACTIVITY</scope>
    <scope>BIOPHYSICOCHEMICAL PROPERTIES</scope>
    <scope>MUTAGENESIS OF LEU-386 AND ILE-494</scope>
</reference>
<reference evidence="33 34" key="19">
    <citation type="journal article" date="2010" name="BMC Struct. Biol.">
        <title>Mechanisms underlying dioxygen reduction in laccases. Structural and modelling studies focusing on proton transfer.</title>
        <authorList>
            <person name="Bento I."/>
            <person name="Silva C.S."/>
            <person name="Chen Z."/>
            <person name="Martins L.O."/>
            <person name="Lindley P.F."/>
            <person name="Soares C.M."/>
        </authorList>
    </citation>
    <scope>X-RAY CRYSTALLOGRAPHY (1.80 ANGSTROMS) IN COMPLEX WITH COPPER</scope>
    <scope>COFACTOR</scope>
    <scope>DOMAIN</scope>
</reference>
<reference evidence="39 40 41" key="20">
    <citation type="journal article" date="2010" name="Dalton Trans.">
        <title>The role of Glu498 in the dioxygen reactivity of CotA-laccase from Bacillus subtilis.</title>
        <authorList>
            <person name="Chen Z."/>
            <person name="Durao P."/>
            <person name="Silva C.S."/>
            <person name="Pereira M.M."/>
            <person name="Todorovic S."/>
            <person name="Hildebrandt P."/>
            <person name="Bento I."/>
            <person name="Lindley P.F."/>
            <person name="Martins L.O."/>
        </authorList>
    </citation>
    <scope>X-RAY CRYSTALLOGRAPHY (1.95 ANGSTROMS) OF MUTANTS ASP-498; LEU-498 AND THR-498 IN COMPLEX WITH COPPER</scope>
    <scope>FUNCTION</scope>
    <scope>CATALYTIC ACTIVITY</scope>
    <scope>COFACTOR</scope>
    <scope>ACTIVITY REGULATION</scope>
    <scope>BIOPHYSICOCHEMICAL PROPERTIES</scope>
    <scope>DOMAIN</scope>
    <scope>MUTAGENESIS OF GLU-498</scope>
</reference>
<reference evidence="36 37 38" key="21">
    <citation type="journal article" date="2012" name="Acta Crystallogr. D">
        <title>The role of Asp116 in the reductive cleavage of dioxygen to water in CotA laccase: assistance during the proton-transfer mechanism.</title>
        <authorList>
            <person name="Silva C.S."/>
            <person name="Damas J.M."/>
            <person name="Chen Z."/>
            <person name="Brissos V."/>
            <person name="Martins L.O."/>
            <person name="Soares C.M."/>
            <person name="Lindley P.F."/>
            <person name="Bento I."/>
        </authorList>
    </citation>
    <scope>X-RAY CRYSTALLOGRAPHY (1.95 ANGSTROMS) OF MUTANTS ALA-116; ASN-116 AND GLU-116 IN COMPLEX WITH COPPER</scope>
</reference>
<reference evidence="42 43" key="22">
    <citation type="submission" date="2014-04" db="PDB data bank">
        <title>The crystal structure of CotA laccase complexed with sinapic acid.</title>
        <authorList>
            <person name="Xie T."/>
            <person name="Liu Z.C."/>
            <person name="Wang G.G."/>
        </authorList>
    </citation>
    <scope>X-RAY CRYSTALLOGRAPHY (1.91 ANGSTROMS) IN COMPLEX WITH COPPER</scope>
</reference>
<reference evidence="44 45" key="23">
    <citation type="journal article" date="2016" name="Acta Crystallogr. F Struct. Biol. Commun.">
        <title>Crystal structure of CotA laccase complexed with 2,2-azinobis-(3-ethylbenzothiazoline-6-sulfonate) at a novel binding site.</title>
        <authorList>
            <person name="Liu Z."/>
            <person name="Xie T."/>
            <person name="Zhong Q."/>
            <person name="Wang G."/>
        </authorList>
    </citation>
    <scope>X-RAY CRYSTALLOGRAPHY (2.30 ANGSTROMS) IN COMPLEX WITH COPPER AND ABTS</scope>
    <scope>FUNCTION</scope>
    <scope>CATALYTIC ACTIVITY</scope>
    <scope>COFACTOR</scope>
    <scope>MUTAGENESIS OF ARG-146; ARG-429; LEU-431; ARG-476; ALA-478 AND THR-480</scope>
</reference>
<reference evidence="46 47 48 49" key="24">
    <citation type="journal article" date="2018" name="ChemBioChem">
        <title>Structural insight into the allosteric coupling of Cu1 site and trinuclear Cu cluster in CotA laccase.</title>
        <authorList>
            <person name="Xie T."/>
            <person name="Liu Z."/>
            <person name="Wang G."/>
        </authorList>
    </citation>
    <scope>X-RAY CRYSTALLOGRAPHY (1.70 ANGSTROMS) OF WILD-TYPE AND MUTANTS CYS-491; ALA-493 AND CYS-493 IN COMPLEX WITH COPPER</scope>
    <scope>MUTAGENESIS OF HIS-491 AND HIS-493</scope>
</reference>
<gene>
    <name evidence="21" type="primary">cotA</name>
    <name type="synonym">pig</name>
    <name type="ordered locus">BSU06300</name>
</gene>
<keyword id="KW-0002">3D-structure</keyword>
<keyword id="KW-0186">Copper</keyword>
<keyword id="KW-0479">Metal-binding</keyword>
<keyword id="KW-0560">Oxidoreductase</keyword>
<keyword id="KW-1185">Reference proteome</keyword>
<keyword id="KW-0677">Repeat</keyword>
<keyword id="KW-0749">Sporulation</keyword>
<sequence>MTLEKFVDALPIPDTLKPVQQSKEKTYYEVTMEECTHQLHRDLPPTRLWGYNGLFPGPTIEVKRNENVYVKWMNNLPSTHFLPIDHTIHHSDSQHEEPEVKTVVHLHGGVTPDDSDGYPEAWFSKDFEQTGPYFKREVYHYPNQQRGAILWYHDHAMALTRLNVYAGLVGAYIIHDPKEKRLKLPSDEYDVPLLITDRTINEDGSLFYPSAPENPSPSLPNPSIVPAFCGETILVNGKVWPYLEVEPRKYRFRVINASNTRTYNLSLDNGGDFIQIGSDGGLLPRSVKLNSFSLAPAERYDIIIDFTAYEGESIILANSAGCGGDVNPETDANIMQFRVTKPLAQKDESRKPKYLASYPSVQHERIQNIRTLKLAGTQDEYGRPVLLLNNKRWHDPVTETPKVGTTEIWSIINPTRGTHPIHLHLVSFRVLDRRPFDIARYQESGELSYTGPAVPPPPSEKGWKDTIQAHAGEVLRIAATFGPYSGRYVWHCHILEHEDYDMMRPMDITDPHK</sequence>
<accession>P07788</accession>
<accession>O24818</accession>